<organism>
    <name type="scientific">Danio rerio</name>
    <name type="common">Zebrafish</name>
    <name type="synonym">Brachydanio rerio</name>
    <dbReference type="NCBI Taxonomy" id="7955"/>
    <lineage>
        <taxon>Eukaryota</taxon>
        <taxon>Metazoa</taxon>
        <taxon>Chordata</taxon>
        <taxon>Craniata</taxon>
        <taxon>Vertebrata</taxon>
        <taxon>Euteleostomi</taxon>
        <taxon>Actinopterygii</taxon>
        <taxon>Neopterygii</taxon>
        <taxon>Teleostei</taxon>
        <taxon>Ostariophysi</taxon>
        <taxon>Cypriniformes</taxon>
        <taxon>Danionidae</taxon>
        <taxon>Danioninae</taxon>
        <taxon>Danio</taxon>
    </lineage>
</organism>
<name>ROP1L_DANRE</name>
<protein>
    <recommendedName>
        <fullName>Ropporin-1-like protein</fullName>
    </recommendedName>
</protein>
<proteinExistence type="evidence at transcript level"/>
<accession>Q66IC9</accession>
<accession>Q7T169</accession>
<reference key="1">
    <citation type="journal article" date="2013" name="Nature">
        <title>The zebrafish reference genome sequence and its relationship to the human genome.</title>
        <authorList>
            <person name="Howe K."/>
            <person name="Clark M.D."/>
            <person name="Torroja C.F."/>
            <person name="Torrance J."/>
            <person name="Berthelot C."/>
            <person name="Muffato M."/>
            <person name="Collins J.E."/>
            <person name="Humphray S."/>
            <person name="McLaren K."/>
            <person name="Matthews L."/>
            <person name="McLaren S."/>
            <person name="Sealy I."/>
            <person name="Caccamo M."/>
            <person name="Churcher C."/>
            <person name="Scott C."/>
            <person name="Barrett J.C."/>
            <person name="Koch R."/>
            <person name="Rauch G.J."/>
            <person name="White S."/>
            <person name="Chow W."/>
            <person name="Kilian B."/>
            <person name="Quintais L.T."/>
            <person name="Guerra-Assuncao J.A."/>
            <person name="Zhou Y."/>
            <person name="Gu Y."/>
            <person name="Yen J."/>
            <person name="Vogel J.H."/>
            <person name="Eyre T."/>
            <person name="Redmond S."/>
            <person name="Banerjee R."/>
            <person name="Chi J."/>
            <person name="Fu B."/>
            <person name="Langley E."/>
            <person name="Maguire S.F."/>
            <person name="Laird G.K."/>
            <person name="Lloyd D."/>
            <person name="Kenyon E."/>
            <person name="Donaldson S."/>
            <person name="Sehra H."/>
            <person name="Almeida-King J."/>
            <person name="Loveland J."/>
            <person name="Trevanion S."/>
            <person name="Jones M."/>
            <person name="Quail M."/>
            <person name="Willey D."/>
            <person name="Hunt A."/>
            <person name="Burton J."/>
            <person name="Sims S."/>
            <person name="McLay K."/>
            <person name="Plumb B."/>
            <person name="Davis J."/>
            <person name="Clee C."/>
            <person name="Oliver K."/>
            <person name="Clark R."/>
            <person name="Riddle C."/>
            <person name="Elliot D."/>
            <person name="Threadgold G."/>
            <person name="Harden G."/>
            <person name="Ware D."/>
            <person name="Begum S."/>
            <person name="Mortimore B."/>
            <person name="Kerry G."/>
            <person name="Heath P."/>
            <person name="Phillimore B."/>
            <person name="Tracey A."/>
            <person name="Corby N."/>
            <person name="Dunn M."/>
            <person name="Johnson C."/>
            <person name="Wood J."/>
            <person name="Clark S."/>
            <person name="Pelan S."/>
            <person name="Griffiths G."/>
            <person name="Smith M."/>
            <person name="Glithero R."/>
            <person name="Howden P."/>
            <person name="Barker N."/>
            <person name="Lloyd C."/>
            <person name="Stevens C."/>
            <person name="Harley J."/>
            <person name="Holt K."/>
            <person name="Panagiotidis G."/>
            <person name="Lovell J."/>
            <person name="Beasley H."/>
            <person name="Henderson C."/>
            <person name="Gordon D."/>
            <person name="Auger K."/>
            <person name="Wright D."/>
            <person name="Collins J."/>
            <person name="Raisen C."/>
            <person name="Dyer L."/>
            <person name="Leung K."/>
            <person name="Robertson L."/>
            <person name="Ambridge K."/>
            <person name="Leongamornlert D."/>
            <person name="McGuire S."/>
            <person name="Gilderthorp R."/>
            <person name="Griffiths C."/>
            <person name="Manthravadi D."/>
            <person name="Nichol S."/>
            <person name="Barker G."/>
            <person name="Whitehead S."/>
            <person name="Kay M."/>
            <person name="Brown J."/>
            <person name="Murnane C."/>
            <person name="Gray E."/>
            <person name="Humphries M."/>
            <person name="Sycamore N."/>
            <person name="Barker D."/>
            <person name="Saunders D."/>
            <person name="Wallis J."/>
            <person name="Babbage A."/>
            <person name="Hammond S."/>
            <person name="Mashreghi-Mohammadi M."/>
            <person name="Barr L."/>
            <person name="Martin S."/>
            <person name="Wray P."/>
            <person name="Ellington A."/>
            <person name="Matthews N."/>
            <person name="Ellwood M."/>
            <person name="Woodmansey R."/>
            <person name="Clark G."/>
            <person name="Cooper J."/>
            <person name="Tromans A."/>
            <person name="Grafham D."/>
            <person name="Skuce C."/>
            <person name="Pandian R."/>
            <person name="Andrews R."/>
            <person name="Harrison E."/>
            <person name="Kimberley A."/>
            <person name="Garnett J."/>
            <person name="Fosker N."/>
            <person name="Hall R."/>
            <person name="Garner P."/>
            <person name="Kelly D."/>
            <person name="Bird C."/>
            <person name="Palmer S."/>
            <person name="Gehring I."/>
            <person name="Berger A."/>
            <person name="Dooley C.M."/>
            <person name="Ersan-Urun Z."/>
            <person name="Eser C."/>
            <person name="Geiger H."/>
            <person name="Geisler M."/>
            <person name="Karotki L."/>
            <person name="Kirn A."/>
            <person name="Konantz J."/>
            <person name="Konantz M."/>
            <person name="Oberlander M."/>
            <person name="Rudolph-Geiger S."/>
            <person name="Teucke M."/>
            <person name="Lanz C."/>
            <person name="Raddatz G."/>
            <person name="Osoegawa K."/>
            <person name="Zhu B."/>
            <person name="Rapp A."/>
            <person name="Widaa S."/>
            <person name="Langford C."/>
            <person name="Yang F."/>
            <person name="Schuster S.C."/>
            <person name="Carter N.P."/>
            <person name="Harrow J."/>
            <person name="Ning Z."/>
            <person name="Herrero J."/>
            <person name="Searle S.M."/>
            <person name="Enright A."/>
            <person name="Geisler R."/>
            <person name="Plasterk R.H."/>
            <person name="Lee C."/>
            <person name="Westerfield M."/>
            <person name="de Jong P.J."/>
            <person name="Zon L.I."/>
            <person name="Postlethwait J.H."/>
            <person name="Nusslein-Volhard C."/>
            <person name="Hubbard T.J."/>
            <person name="Roest Crollius H."/>
            <person name="Rogers J."/>
            <person name="Stemple D.L."/>
        </authorList>
    </citation>
    <scope>NUCLEOTIDE SEQUENCE [LARGE SCALE GENOMIC DNA]</scope>
    <source>
        <strain>Tuebingen</strain>
    </source>
</reference>
<reference key="2">
    <citation type="submission" date="2004-09" db="EMBL/GenBank/DDBJ databases">
        <authorList>
            <consortium name="NIH - Zebrafish Gene Collection (ZGC) project"/>
        </authorList>
    </citation>
    <scope>NUCLEOTIDE SEQUENCE [LARGE SCALE MRNA]</scope>
    <source>
        <tissue>Olfactory epithelium</tissue>
    </source>
</reference>
<evidence type="ECO:0000250" key="1">
    <source>
        <dbReference type="UniProtKB" id="Q96C74"/>
    </source>
</evidence>
<evidence type="ECO:0000250" key="2">
    <source>
        <dbReference type="UniProtKB" id="Q9EQ00"/>
    </source>
</evidence>
<evidence type="ECO:0000256" key="3">
    <source>
        <dbReference type="SAM" id="MobiDB-lite"/>
    </source>
</evidence>
<evidence type="ECO:0000305" key="4"/>
<feature type="chain" id="PRO_0000307401" description="Ropporin-1-like protein">
    <location>
        <begin position="1"/>
        <end position="218"/>
    </location>
</feature>
<feature type="domain" description="RIIa">
    <location>
        <begin position="17"/>
        <end position="54"/>
    </location>
</feature>
<feature type="region of interest" description="Disordered" evidence="3">
    <location>
        <begin position="199"/>
        <end position="218"/>
    </location>
</feature>
<sequence length="218" mass="24171">MPLSETMYCAQQINIPPALPNMLKQFTKAAIRTQPRDVLQWAADYFSALSKGQDLPVKKRLELPVATQKTDTGLTPGLLKILHQQLTSKETVTKDELLPKWKALHLPVEQLDTILALGNFSENINWMQFFALACSALGGSITSALKHACEILTEDPEGGPAQIPFHMFRSLYTYLAHLDGEIPEEQIDSFLHSLEGQAQSQGGMVQPSNFTSLHTAEK</sequence>
<dbReference type="EMBL" id="AL627129">
    <property type="status" value="NOT_ANNOTATED_CDS"/>
    <property type="molecule type" value="Genomic_DNA"/>
</dbReference>
<dbReference type="EMBL" id="BC081402">
    <property type="protein sequence ID" value="AAH81402.1"/>
    <property type="molecule type" value="mRNA"/>
</dbReference>
<dbReference type="EMBL" id="BC152162">
    <property type="protein sequence ID" value="AAI52163.1"/>
    <property type="molecule type" value="mRNA"/>
</dbReference>
<dbReference type="RefSeq" id="NP_001004624.1">
    <property type="nucleotide sequence ID" value="NM_001004624.1"/>
</dbReference>
<dbReference type="SMR" id="Q66IC9"/>
<dbReference type="FunCoup" id="Q66IC9">
    <property type="interactions" value="423"/>
</dbReference>
<dbReference type="STRING" id="7955.ENSDARP00000123631"/>
<dbReference type="PaxDb" id="7955-ENSDARP00000075677"/>
<dbReference type="Ensembl" id="ENSDART00000081234">
    <property type="protein sequence ID" value="ENSDARP00000075677"/>
    <property type="gene ID" value="ENSDARG00000058370"/>
</dbReference>
<dbReference type="Ensembl" id="ENSDART00000188597">
    <property type="protein sequence ID" value="ENSDARP00000154104"/>
    <property type="gene ID" value="ENSDARG00000114122"/>
</dbReference>
<dbReference type="GeneID" id="798354"/>
<dbReference type="KEGG" id="dre:798354"/>
<dbReference type="AGR" id="ZFIN:ZDB-GENE-040724-235"/>
<dbReference type="CTD" id="83853"/>
<dbReference type="ZFIN" id="ZDB-GENE-040724-235">
    <property type="gene designation" value="ropn1l"/>
</dbReference>
<dbReference type="eggNOG" id="ENOG502QTNR">
    <property type="taxonomic scope" value="Eukaryota"/>
</dbReference>
<dbReference type="HOGENOM" id="CLU_069829_1_0_1"/>
<dbReference type="InParanoid" id="Q66IC9"/>
<dbReference type="OMA" id="QWSSAYF"/>
<dbReference type="OrthoDB" id="10067602at2759"/>
<dbReference type="PhylomeDB" id="Q66IC9"/>
<dbReference type="TreeFam" id="TF105421"/>
<dbReference type="PRO" id="PR:Q66IC9"/>
<dbReference type="Proteomes" id="UP000000437">
    <property type="component" value="Alternate scaffold 24"/>
</dbReference>
<dbReference type="Proteomes" id="UP000000437">
    <property type="component" value="Chromosome 24"/>
</dbReference>
<dbReference type="Bgee" id="ENSDARG00000058370">
    <property type="expression patterns" value="Expressed in testis and 15 other cell types or tissues"/>
</dbReference>
<dbReference type="ExpressionAtlas" id="Q66IC9">
    <property type="expression patterns" value="baseline"/>
</dbReference>
<dbReference type="GO" id="GO:0031514">
    <property type="term" value="C:motile cilium"/>
    <property type="evidence" value="ECO:0007669"/>
    <property type="project" value="UniProtKB-SubCell"/>
</dbReference>
<dbReference type="GO" id="GO:0001534">
    <property type="term" value="C:radial spoke"/>
    <property type="evidence" value="ECO:0000250"/>
    <property type="project" value="UniProtKB"/>
</dbReference>
<dbReference type="GO" id="GO:0007286">
    <property type="term" value="P:spermatid development"/>
    <property type="evidence" value="ECO:0000315"/>
    <property type="project" value="ZFIN"/>
</dbReference>
<dbReference type="CDD" id="cd23019">
    <property type="entry name" value="DD_ROP"/>
    <property type="match status" value="1"/>
</dbReference>
<dbReference type="FunFam" id="1.20.890.10:FF:000004">
    <property type="entry name" value="ropporin-1-like protein isoform X2"/>
    <property type="match status" value="1"/>
</dbReference>
<dbReference type="Gene3D" id="1.20.890.10">
    <property type="entry name" value="cAMP-dependent protein kinase regulatory subunit, dimerization-anchoring domain"/>
    <property type="match status" value="1"/>
</dbReference>
<dbReference type="InterPro" id="IPR047844">
    <property type="entry name" value="ROP_DD"/>
</dbReference>
<dbReference type="PANTHER" id="PTHR14952">
    <property type="entry name" value="ROPPORIN-1-LIKE PROTEIN"/>
    <property type="match status" value="1"/>
</dbReference>
<dbReference type="PANTHER" id="PTHR14952:SF14">
    <property type="entry name" value="ROPPORIN-1-LIKE PROTEIN"/>
    <property type="match status" value="1"/>
</dbReference>
<dbReference type="SUPFAM" id="SSF47391">
    <property type="entry name" value="Dimerization-anchoring domain of cAMP-dependent PK regulatory subunit"/>
    <property type="match status" value="1"/>
</dbReference>
<gene>
    <name type="primary">ropn1l</name>
    <name type="ORF">si:rp71-1f1.7</name>
</gene>
<keyword id="KW-0966">Cell projection</keyword>
<keyword id="KW-0969">Cilium</keyword>
<keyword id="KW-0282">Flagellum</keyword>
<keyword id="KW-1185">Reference proteome</keyword>
<comment type="function">
    <text evidence="2">Functions as part of axonemal radial spoke complexes that play an important part in the motility of sperm and cilia. Important for male fertility. Involved in fibrous sheath integrity and sperm motility, plays a role in PKA-dependent signaling processes required for spermatozoa capacitation.</text>
</comment>
<comment type="subunit">
    <text evidence="2">Component of axonemal radial spoke complexes (By similarity).</text>
</comment>
<comment type="subcellular location">
    <subcellularLocation>
        <location evidence="2">Cell projection</location>
        <location evidence="2">Cilium</location>
        <location evidence="2">Flagellum</location>
    </subcellularLocation>
    <subcellularLocation>
        <location evidence="1">Cell projection</location>
        <location evidence="1">Cilium</location>
    </subcellularLocation>
</comment>
<comment type="similarity">
    <text evidence="4">Belongs to the ropporin family.</text>
</comment>